<evidence type="ECO:0000255" key="1">
    <source>
        <dbReference type="HAMAP-Rule" id="MF_00639"/>
    </source>
</evidence>
<proteinExistence type="inferred from homology"/>
<dbReference type="EC" id="6.3.2.9" evidence="1"/>
<dbReference type="EMBL" id="CR931997">
    <property type="protein sequence ID" value="CAI36910.1"/>
    <property type="molecule type" value="Genomic_DNA"/>
</dbReference>
<dbReference type="SMR" id="Q4JW97"/>
<dbReference type="STRING" id="306537.jk0748"/>
<dbReference type="KEGG" id="cjk:jk0748"/>
<dbReference type="eggNOG" id="COG0771">
    <property type="taxonomic scope" value="Bacteria"/>
</dbReference>
<dbReference type="HOGENOM" id="CLU_032540_0_0_11"/>
<dbReference type="OrthoDB" id="9809796at2"/>
<dbReference type="UniPathway" id="UPA00219"/>
<dbReference type="Proteomes" id="UP000000545">
    <property type="component" value="Chromosome"/>
</dbReference>
<dbReference type="GO" id="GO:0005737">
    <property type="term" value="C:cytoplasm"/>
    <property type="evidence" value="ECO:0007669"/>
    <property type="project" value="UniProtKB-SubCell"/>
</dbReference>
<dbReference type="GO" id="GO:0005524">
    <property type="term" value="F:ATP binding"/>
    <property type="evidence" value="ECO:0007669"/>
    <property type="project" value="UniProtKB-UniRule"/>
</dbReference>
<dbReference type="GO" id="GO:0004326">
    <property type="term" value="F:tetrahydrofolylpolyglutamate synthase activity"/>
    <property type="evidence" value="ECO:0007669"/>
    <property type="project" value="InterPro"/>
</dbReference>
<dbReference type="GO" id="GO:0008764">
    <property type="term" value="F:UDP-N-acetylmuramoylalanine-D-glutamate ligase activity"/>
    <property type="evidence" value="ECO:0007669"/>
    <property type="project" value="UniProtKB-UniRule"/>
</dbReference>
<dbReference type="GO" id="GO:0051301">
    <property type="term" value="P:cell division"/>
    <property type="evidence" value="ECO:0007669"/>
    <property type="project" value="UniProtKB-KW"/>
</dbReference>
<dbReference type="GO" id="GO:0071555">
    <property type="term" value="P:cell wall organization"/>
    <property type="evidence" value="ECO:0007669"/>
    <property type="project" value="UniProtKB-KW"/>
</dbReference>
<dbReference type="GO" id="GO:0009252">
    <property type="term" value="P:peptidoglycan biosynthetic process"/>
    <property type="evidence" value="ECO:0007669"/>
    <property type="project" value="UniProtKB-UniRule"/>
</dbReference>
<dbReference type="GO" id="GO:0008360">
    <property type="term" value="P:regulation of cell shape"/>
    <property type="evidence" value="ECO:0007669"/>
    <property type="project" value="UniProtKB-KW"/>
</dbReference>
<dbReference type="Gene3D" id="3.90.190.20">
    <property type="entry name" value="Mur ligase, C-terminal domain"/>
    <property type="match status" value="1"/>
</dbReference>
<dbReference type="Gene3D" id="3.40.1190.10">
    <property type="entry name" value="Mur-like, catalytic domain"/>
    <property type="match status" value="1"/>
</dbReference>
<dbReference type="Gene3D" id="3.40.50.720">
    <property type="entry name" value="NAD(P)-binding Rossmann-like Domain"/>
    <property type="match status" value="1"/>
</dbReference>
<dbReference type="HAMAP" id="MF_00639">
    <property type="entry name" value="MurD"/>
    <property type="match status" value="1"/>
</dbReference>
<dbReference type="InterPro" id="IPR018109">
    <property type="entry name" value="Folylpolyglutamate_synth_CS"/>
</dbReference>
<dbReference type="InterPro" id="IPR036565">
    <property type="entry name" value="Mur-like_cat_sf"/>
</dbReference>
<dbReference type="InterPro" id="IPR004101">
    <property type="entry name" value="Mur_ligase_C"/>
</dbReference>
<dbReference type="InterPro" id="IPR036615">
    <property type="entry name" value="Mur_ligase_C_dom_sf"/>
</dbReference>
<dbReference type="InterPro" id="IPR013221">
    <property type="entry name" value="Mur_ligase_cen"/>
</dbReference>
<dbReference type="InterPro" id="IPR005762">
    <property type="entry name" value="MurD"/>
</dbReference>
<dbReference type="NCBIfam" id="TIGR01087">
    <property type="entry name" value="murD"/>
    <property type="match status" value="1"/>
</dbReference>
<dbReference type="PANTHER" id="PTHR43692">
    <property type="entry name" value="UDP-N-ACETYLMURAMOYLALANINE--D-GLUTAMATE LIGASE"/>
    <property type="match status" value="1"/>
</dbReference>
<dbReference type="PANTHER" id="PTHR43692:SF1">
    <property type="entry name" value="UDP-N-ACETYLMURAMOYLALANINE--D-GLUTAMATE LIGASE"/>
    <property type="match status" value="1"/>
</dbReference>
<dbReference type="Pfam" id="PF02875">
    <property type="entry name" value="Mur_ligase_C"/>
    <property type="match status" value="1"/>
</dbReference>
<dbReference type="Pfam" id="PF08245">
    <property type="entry name" value="Mur_ligase_M"/>
    <property type="match status" value="1"/>
</dbReference>
<dbReference type="SUPFAM" id="SSF51984">
    <property type="entry name" value="MurCD N-terminal domain"/>
    <property type="match status" value="1"/>
</dbReference>
<dbReference type="SUPFAM" id="SSF53623">
    <property type="entry name" value="MurD-like peptide ligases, catalytic domain"/>
    <property type="match status" value="1"/>
</dbReference>
<dbReference type="SUPFAM" id="SSF53244">
    <property type="entry name" value="MurD-like peptide ligases, peptide-binding domain"/>
    <property type="match status" value="1"/>
</dbReference>
<comment type="function">
    <text evidence="1">Cell wall formation. Catalyzes the addition of glutamate to the nucleotide precursor UDP-N-acetylmuramoyl-L-alanine (UMA).</text>
</comment>
<comment type="catalytic activity">
    <reaction evidence="1">
        <text>UDP-N-acetyl-alpha-D-muramoyl-L-alanine + D-glutamate + ATP = UDP-N-acetyl-alpha-D-muramoyl-L-alanyl-D-glutamate + ADP + phosphate + H(+)</text>
        <dbReference type="Rhea" id="RHEA:16429"/>
        <dbReference type="ChEBI" id="CHEBI:15378"/>
        <dbReference type="ChEBI" id="CHEBI:29986"/>
        <dbReference type="ChEBI" id="CHEBI:30616"/>
        <dbReference type="ChEBI" id="CHEBI:43474"/>
        <dbReference type="ChEBI" id="CHEBI:83898"/>
        <dbReference type="ChEBI" id="CHEBI:83900"/>
        <dbReference type="ChEBI" id="CHEBI:456216"/>
        <dbReference type="EC" id="6.3.2.9"/>
    </reaction>
</comment>
<comment type="pathway">
    <text evidence="1">Cell wall biogenesis; peptidoglycan biosynthesis.</text>
</comment>
<comment type="subcellular location">
    <subcellularLocation>
        <location evidence="1">Cytoplasm</location>
    </subcellularLocation>
</comment>
<comment type="similarity">
    <text evidence="1">Belongs to the MurCDEF family.</text>
</comment>
<organism>
    <name type="scientific">Corynebacterium jeikeium (strain K411)</name>
    <dbReference type="NCBI Taxonomy" id="306537"/>
    <lineage>
        <taxon>Bacteria</taxon>
        <taxon>Bacillati</taxon>
        <taxon>Actinomycetota</taxon>
        <taxon>Actinomycetes</taxon>
        <taxon>Mycobacteriales</taxon>
        <taxon>Corynebacteriaceae</taxon>
        <taxon>Corynebacterium</taxon>
    </lineage>
</organism>
<name>MURD_CORJK</name>
<sequence length="502" mass="51982">MESTHALQPAEALETMRSQTVLVAGAGVAGRGVISMLCALGARLVLVADDNAQALGHIADDGDTELRLLSVSDAIDTLEELAPQLVVTSPGWKPESPLLARAAELNIPVIGDIAAAWLADQAGAFGQPRTWLAVTGTNGKTTTTAMLTSMLIADGRAALAVGNIGIAPSAALAAQHRGEPRSDVFVAEVSSFQLHWAPMFKPTVGCILNLAEDHLDWHGSYENYCADKAQVLTAEESVLALDDDDVLTTARAREVVARRGYTIHDPEEVASQNTERVVGVRDGRLVEVVIGDPSQTTDLAPAQGISPPGPAGLADAAASAAMARALGVAPGAIEAALAGFKVQAHRGQVVLEHGGVTWIDNSKATNPHAAEAALRGQRNVIWVAGGQLKGAAVDGLIRAIGGALKAVVALGVDRAELVAEVSRQLPDLPVTVIDATDPEEAMRAVARAAHGLAQPGDSVVLAPAAASLDMYTGMSQRGDLFAQYAVAYAGADRADERTQERG</sequence>
<gene>
    <name evidence="1" type="primary">murD</name>
    <name type="ordered locus">jk0748</name>
</gene>
<reference key="1">
    <citation type="journal article" date="2005" name="J. Bacteriol.">
        <title>Complete genome sequence and analysis of the multiresistant nosocomial pathogen Corynebacterium jeikeium K411, a lipid-requiring bacterium of the human skin flora.</title>
        <authorList>
            <person name="Tauch A."/>
            <person name="Kaiser O."/>
            <person name="Hain T."/>
            <person name="Goesmann A."/>
            <person name="Weisshaar B."/>
            <person name="Albersmeier A."/>
            <person name="Bekel T."/>
            <person name="Bischoff N."/>
            <person name="Brune I."/>
            <person name="Chakraborty T."/>
            <person name="Kalinowski J."/>
            <person name="Meyer F."/>
            <person name="Rupp O."/>
            <person name="Schneiker S."/>
            <person name="Viehoever P."/>
            <person name="Puehler A."/>
        </authorList>
    </citation>
    <scope>NUCLEOTIDE SEQUENCE [LARGE SCALE GENOMIC DNA]</scope>
    <source>
        <strain>K411</strain>
    </source>
</reference>
<accession>Q4JW97</accession>
<feature type="chain" id="PRO_0000109005" description="UDP-N-acetylmuramoylalanine--D-glutamate ligase">
    <location>
        <begin position="1"/>
        <end position="502"/>
    </location>
</feature>
<feature type="binding site" evidence="1">
    <location>
        <begin position="136"/>
        <end position="142"/>
    </location>
    <ligand>
        <name>ATP</name>
        <dbReference type="ChEBI" id="CHEBI:30616"/>
    </ligand>
</feature>
<keyword id="KW-0067">ATP-binding</keyword>
<keyword id="KW-0131">Cell cycle</keyword>
<keyword id="KW-0132">Cell division</keyword>
<keyword id="KW-0133">Cell shape</keyword>
<keyword id="KW-0961">Cell wall biogenesis/degradation</keyword>
<keyword id="KW-0963">Cytoplasm</keyword>
<keyword id="KW-0436">Ligase</keyword>
<keyword id="KW-0547">Nucleotide-binding</keyword>
<keyword id="KW-0573">Peptidoglycan synthesis</keyword>
<keyword id="KW-1185">Reference proteome</keyword>
<protein>
    <recommendedName>
        <fullName evidence="1">UDP-N-acetylmuramoylalanine--D-glutamate ligase</fullName>
        <ecNumber evidence="1">6.3.2.9</ecNumber>
    </recommendedName>
    <alternativeName>
        <fullName evidence="1">D-glutamic acid-adding enzyme</fullName>
    </alternativeName>
    <alternativeName>
        <fullName evidence="1">UDP-N-acetylmuramoyl-L-alanyl-D-glutamate synthetase</fullName>
    </alternativeName>
</protein>